<evidence type="ECO:0000255" key="1">
    <source>
        <dbReference type="HAMAP-Rule" id="MF_01013"/>
    </source>
</evidence>
<gene>
    <name evidence="1" type="primary">hisF</name>
    <name type="ordered locus">Mmar10_1611</name>
</gene>
<keyword id="KW-0028">Amino-acid biosynthesis</keyword>
<keyword id="KW-0963">Cytoplasm</keyword>
<keyword id="KW-0368">Histidine biosynthesis</keyword>
<keyword id="KW-0456">Lyase</keyword>
<keyword id="KW-1185">Reference proteome</keyword>
<proteinExistence type="inferred from homology"/>
<comment type="function">
    <text evidence="1">IGPS catalyzes the conversion of PRFAR and glutamine to IGP, AICAR and glutamate. The HisF subunit catalyzes the cyclization activity that produces IGP and AICAR from PRFAR using the ammonia provided by the HisH subunit.</text>
</comment>
<comment type="catalytic activity">
    <reaction evidence="1">
        <text>5-[(5-phospho-1-deoxy-D-ribulos-1-ylimino)methylamino]-1-(5-phospho-beta-D-ribosyl)imidazole-4-carboxamide + L-glutamine = D-erythro-1-(imidazol-4-yl)glycerol 3-phosphate + 5-amino-1-(5-phospho-beta-D-ribosyl)imidazole-4-carboxamide + L-glutamate + H(+)</text>
        <dbReference type="Rhea" id="RHEA:24793"/>
        <dbReference type="ChEBI" id="CHEBI:15378"/>
        <dbReference type="ChEBI" id="CHEBI:29985"/>
        <dbReference type="ChEBI" id="CHEBI:58278"/>
        <dbReference type="ChEBI" id="CHEBI:58359"/>
        <dbReference type="ChEBI" id="CHEBI:58475"/>
        <dbReference type="ChEBI" id="CHEBI:58525"/>
        <dbReference type="EC" id="4.3.2.10"/>
    </reaction>
</comment>
<comment type="pathway">
    <text evidence="1">Amino-acid biosynthesis; L-histidine biosynthesis; L-histidine from 5-phospho-alpha-D-ribose 1-diphosphate: step 5/9.</text>
</comment>
<comment type="subunit">
    <text evidence="1">Heterodimer of HisH and HisF.</text>
</comment>
<comment type="subcellular location">
    <subcellularLocation>
        <location evidence="1">Cytoplasm</location>
    </subcellularLocation>
</comment>
<comment type="similarity">
    <text evidence="1">Belongs to the HisA/HisF family.</text>
</comment>
<feature type="chain" id="PRO_1000063082" description="Imidazole glycerol phosphate synthase subunit HisF">
    <location>
        <begin position="1"/>
        <end position="255"/>
    </location>
</feature>
<feature type="active site" evidence="1">
    <location>
        <position position="11"/>
    </location>
</feature>
<feature type="active site" evidence="1">
    <location>
        <position position="130"/>
    </location>
</feature>
<sequence length="255" mass="27777">MLARRLIPCLDVRDGRVVKGVRFRDHEDVGDIVDLARRYAREGADELVFYDIAASARGRTVEPEWVSAVARELDIPFCVAGGIRSVDDARARLFAGADKISVNTPALEDPTIIDRLAAEFGSQCVVLGVDSRMIEGAWRVHQYTGDPDKSFAGHRRTLDWIGEGVDRGAGEVVLNCMDQDGVRDGYDIAQLEAARAMCSTPLIASGGAGRKEHFKSVFELAKVDGALAASVFHKGVIEIGQLKSWLDGEGIRVRP</sequence>
<reference key="1">
    <citation type="submission" date="2006-08" db="EMBL/GenBank/DDBJ databases">
        <title>Complete sequence of Maricaulis maris MCS10.</title>
        <authorList>
            <consortium name="US DOE Joint Genome Institute"/>
            <person name="Copeland A."/>
            <person name="Lucas S."/>
            <person name="Lapidus A."/>
            <person name="Barry K."/>
            <person name="Detter J.C."/>
            <person name="Glavina del Rio T."/>
            <person name="Hammon N."/>
            <person name="Israni S."/>
            <person name="Dalin E."/>
            <person name="Tice H."/>
            <person name="Pitluck S."/>
            <person name="Saunders E."/>
            <person name="Brettin T."/>
            <person name="Bruce D."/>
            <person name="Han C."/>
            <person name="Tapia R."/>
            <person name="Gilna P."/>
            <person name="Schmutz J."/>
            <person name="Larimer F."/>
            <person name="Land M."/>
            <person name="Hauser L."/>
            <person name="Kyrpides N."/>
            <person name="Mikhailova N."/>
            <person name="Viollier P."/>
            <person name="Stephens C."/>
            <person name="Richardson P."/>
        </authorList>
    </citation>
    <scope>NUCLEOTIDE SEQUENCE [LARGE SCALE GENOMIC DNA]</scope>
    <source>
        <strain>MCS10</strain>
    </source>
</reference>
<accession>Q0AP84</accession>
<organism>
    <name type="scientific">Maricaulis maris (strain MCS10)</name>
    <name type="common">Caulobacter maris</name>
    <dbReference type="NCBI Taxonomy" id="394221"/>
    <lineage>
        <taxon>Bacteria</taxon>
        <taxon>Pseudomonadati</taxon>
        <taxon>Pseudomonadota</taxon>
        <taxon>Alphaproteobacteria</taxon>
        <taxon>Maricaulales</taxon>
        <taxon>Maricaulaceae</taxon>
        <taxon>Maricaulis</taxon>
    </lineage>
</organism>
<dbReference type="EC" id="4.3.2.10" evidence="1"/>
<dbReference type="EMBL" id="CP000449">
    <property type="protein sequence ID" value="ABI65903.1"/>
    <property type="molecule type" value="Genomic_DNA"/>
</dbReference>
<dbReference type="RefSeq" id="WP_011643550.1">
    <property type="nucleotide sequence ID" value="NC_008347.1"/>
</dbReference>
<dbReference type="SMR" id="Q0AP84"/>
<dbReference type="STRING" id="394221.Mmar10_1611"/>
<dbReference type="KEGG" id="mmr:Mmar10_1611"/>
<dbReference type="eggNOG" id="COG0107">
    <property type="taxonomic scope" value="Bacteria"/>
</dbReference>
<dbReference type="HOGENOM" id="CLU_048577_4_0_5"/>
<dbReference type="OrthoDB" id="9781903at2"/>
<dbReference type="UniPathway" id="UPA00031">
    <property type="reaction ID" value="UER00010"/>
</dbReference>
<dbReference type="Proteomes" id="UP000001964">
    <property type="component" value="Chromosome"/>
</dbReference>
<dbReference type="GO" id="GO:0005737">
    <property type="term" value="C:cytoplasm"/>
    <property type="evidence" value="ECO:0007669"/>
    <property type="project" value="UniProtKB-SubCell"/>
</dbReference>
<dbReference type="GO" id="GO:0000107">
    <property type="term" value="F:imidazoleglycerol-phosphate synthase activity"/>
    <property type="evidence" value="ECO:0007669"/>
    <property type="project" value="UniProtKB-UniRule"/>
</dbReference>
<dbReference type="GO" id="GO:0016829">
    <property type="term" value="F:lyase activity"/>
    <property type="evidence" value="ECO:0007669"/>
    <property type="project" value="UniProtKB-KW"/>
</dbReference>
<dbReference type="GO" id="GO:0000105">
    <property type="term" value="P:L-histidine biosynthetic process"/>
    <property type="evidence" value="ECO:0007669"/>
    <property type="project" value="UniProtKB-UniRule"/>
</dbReference>
<dbReference type="CDD" id="cd04731">
    <property type="entry name" value="HisF"/>
    <property type="match status" value="1"/>
</dbReference>
<dbReference type="Gene3D" id="3.20.20.70">
    <property type="entry name" value="Aldolase class I"/>
    <property type="match status" value="1"/>
</dbReference>
<dbReference type="HAMAP" id="MF_01013">
    <property type="entry name" value="HisF"/>
    <property type="match status" value="1"/>
</dbReference>
<dbReference type="InterPro" id="IPR013785">
    <property type="entry name" value="Aldolase_TIM"/>
</dbReference>
<dbReference type="InterPro" id="IPR006062">
    <property type="entry name" value="His_biosynth"/>
</dbReference>
<dbReference type="InterPro" id="IPR004651">
    <property type="entry name" value="HisF"/>
</dbReference>
<dbReference type="InterPro" id="IPR050064">
    <property type="entry name" value="IGPS_HisA/HisF"/>
</dbReference>
<dbReference type="InterPro" id="IPR011060">
    <property type="entry name" value="RibuloseP-bd_barrel"/>
</dbReference>
<dbReference type="NCBIfam" id="TIGR00735">
    <property type="entry name" value="hisF"/>
    <property type="match status" value="1"/>
</dbReference>
<dbReference type="PANTHER" id="PTHR21235:SF2">
    <property type="entry name" value="IMIDAZOLE GLYCEROL PHOSPHATE SYNTHASE HISHF"/>
    <property type="match status" value="1"/>
</dbReference>
<dbReference type="PANTHER" id="PTHR21235">
    <property type="entry name" value="IMIDAZOLE GLYCEROL PHOSPHATE SYNTHASE SUBUNIT HISF/H IGP SYNTHASE SUBUNIT HISF/H"/>
    <property type="match status" value="1"/>
</dbReference>
<dbReference type="Pfam" id="PF00977">
    <property type="entry name" value="His_biosynth"/>
    <property type="match status" value="1"/>
</dbReference>
<dbReference type="SUPFAM" id="SSF51366">
    <property type="entry name" value="Ribulose-phoshate binding barrel"/>
    <property type="match status" value="1"/>
</dbReference>
<protein>
    <recommendedName>
        <fullName evidence="1">Imidazole glycerol phosphate synthase subunit HisF</fullName>
        <ecNumber evidence="1">4.3.2.10</ecNumber>
    </recommendedName>
    <alternativeName>
        <fullName evidence="1">IGP synthase cyclase subunit</fullName>
    </alternativeName>
    <alternativeName>
        <fullName evidence="1">IGP synthase subunit HisF</fullName>
    </alternativeName>
    <alternativeName>
        <fullName evidence="1">ImGP synthase subunit HisF</fullName>
        <shortName evidence="1">IGPS subunit HisF</shortName>
    </alternativeName>
</protein>
<name>HIS6_MARMM</name>